<feature type="chain" id="PRO_0000130469" description="Large ribosomal subunit protein uL29">
    <location>
        <begin position="1"/>
        <end position="68"/>
    </location>
</feature>
<protein>
    <recommendedName>
        <fullName evidence="1">Large ribosomal subunit protein uL29</fullName>
    </recommendedName>
    <alternativeName>
        <fullName>50S ribosomal protein L29</fullName>
    </alternativeName>
</protein>
<proteinExistence type="inferred from homology"/>
<keyword id="KW-1185">Reference proteome</keyword>
<keyword id="KW-0687">Ribonucleoprotein</keyword>
<keyword id="KW-0689">Ribosomal protein</keyword>
<dbReference type="EMBL" id="AF126059">
    <property type="protein sequence ID" value="AAD33264.1"/>
    <property type="molecule type" value="Genomic_DNA"/>
</dbReference>
<dbReference type="EMBL" id="AE007317">
    <property type="protein sequence ID" value="AAK99001.1"/>
    <property type="molecule type" value="Genomic_DNA"/>
</dbReference>
<dbReference type="PIR" id="E97896">
    <property type="entry name" value="E97896"/>
</dbReference>
<dbReference type="RefSeq" id="NP_357791.1">
    <property type="nucleotide sequence ID" value="NC_003098.1"/>
</dbReference>
<dbReference type="RefSeq" id="WP_000772918.1">
    <property type="nucleotide sequence ID" value="NC_003098.1"/>
</dbReference>
<dbReference type="SMR" id="P0A484"/>
<dbReference type="STRING" id="171101.spr0197"/>
<dbReference type="GeneID" id="93738965"/>
<dbReference type="KEGG" id="spr:spr0197"/>
<dbReference type="PATRIC" id="fig|171101.6.peg.228"/>
<dbReference type="eggNOG" id="COG0255">
    <property type="taxonomic scope" value="Bacteria"/>
</dbReference>
<dbReference type="HOGENOM" id="CLU_158491_5_2_9"/>
<dbReference type="PRO" id="PR:P0A484"/>
<dbReference type="Proteomes" id="UP000000586">
    <property type="component" value="Chromosome"/>
</dbReference>
<dbReference type="GO" id="GO:0022625">
    <property type="term" value="C:cytosolic large ribosomal subunit"/>
    <property type="evidence" value="ECO:0000318"/>
    <property type="project" value="GO_Central"/>
</dbReference>
<dbReference type="GO" id="GO:0003735">
    <property type="term" value="F:structural constituent of ribosome"/>
    <property type="evidence" value="ECO:0007669"/>
    <property type="project" value="InterPro"/>
</dbReference>
<dbReference type="GO" id="GO:0006412">
    <property type="term" value="P:translation"/>
    <property type="evidence" value="ECO:0007669"/>
    <property type="project" value="UniProtKB-UniRule"/>
</dbReference>
<dbReference type="CDD" id="cd00427">
    <property type="entry name" value="Ribosomal_L29_HIP"/>
    <property type="match status" value="1"/>
</dbReference>
<dbReference type="FunFam" id="1.10.287.310:FF:000001">
    <property type="entry name" value="50S ribosomal protein L29"/>
    <property type="match status" value="1"/>
</dbReference>
<dbReference type="Gene3D" id="1.10.287.310">
    <property type="match status" value="1"/>
</dbReference>
<dbReference type="HAMAP" id="MF_00374">
    <property type="entry name" value="Ribosomal_uL29"/>
    <property type="match status" value="1"/>
</dbReference>
<dbReference type="InterPro" id="IPR050063">
    <property type="entry name" value="Ribosomal_protein_uL29"/>
</dbReference>
<dbReference type="InterPro" id="IPR001854">
    <property type="entry name" value="Ribosomal_uL29"/>
</dbReference>
<dbReference type="InterPro" id="IPR018254">
    <property type="entry name" value="Ribosomal_uL29_CS"/>
</dbReference>
<dbReference type="InterPro" id="IPR036049">
    <property type="entry name" value="Ribosomal_uL29_sf"/>
</dbReference>
<dbReference type="NCBIfam" id="TIGR00012">
    <property type="entry name" value="L29"/>
    <property type="match status" value="1"/>
</dbReference>
<dbReference type="PANTHER" id="PTHR10916">
    <property type="entry name" value="60S RIBOSOMAL PROTEIN L35/50S RIBOSOMAL PROTEIN L29"/>
    <property type="match status" value="1"/>
</dbReference>
<dbReference type="PANTHER" id="PTHR10916:SF0">
    <property type="entry name" value="LARGE RIBOSOMAL SUBUNIT PROTEIN UL29C"/>
    <property type="match status" value="1"/>
</dbReference>
<dbReference type="Pfam" id="PF00831">
    <property type="entry name" value="Ribosomal_L29"/>
    <property type="match status" value="1"/>
</dbReference>
<dbReference type="SUPFAM" id="SSF46561">
    <property type="entry name" value="Ribosomal protein L29 (L29p)"/>
    <property type="match status" value="1"/>
</dbReference>
<dbReference type="PROSITE" id="PS00579">
    <property type="entry name" value="RIBOSOMAL_L29"/>
    <property type="match status" value="1"/>
</dbReference>
<accession>P0A484</accession>
<accession>Q9WVW8</accession>
<organism>
    <name type="scientific">Streptococcus pneumoniae (strain ATCC BAA-255 / R6)</name>
    <dbReference type="NCBI Taxonomy" id="171101"/>
    <lineage>
        <taxon>Bacteria</taxon>
        <taxon>Bacillati</taxon>
        <taxon>Bacillota</taxon>
        <taxon>Bacilli</taxon>
        <taxon>Lactobacillales</taxon>
        <taxon>Streptococcaceae</taxon>
        <taxon>Streptococcus</taxon>
    </lineage>
</organism>
<evidence type="ECO:0000305" key="1"/>
<gene>
    <name type="primary">rpmC</name>
    <name type="ordered locus">spr0197</name>
</gene>
<comment type="similarity">
    <text evidence="1">Belongs to the universal ribosomal protein uL29 family.</text>
</comment>
<reference key="1">
    <citation type="journal article" date="2000" name="Antimicrob. Agents Chemother.">
        <title>Mutations in ribosomal protein L16 conferring reduced susceptibility to evernimicin (SCH27899): implications for mechanism of action.</title>
        <authorList>
            <person name="Adrian P.V."/>
            <person name="Zhao W."/>
            <person name="Black T.A."/>
            <person name="Shaw K.J."/>
            <person name="Hare R.S."/>
            <person name="Klugman K.P."/>
        </authorList>
    </citation>
    <scope>NUCLEOTIDE SEQUENCE [GENOMIC DNA]</scope>
</reference>
<reference key="2">
    <citation type="journal article" date="2001" name="J. Bacteriol.">
        <title>Genome of the bacterium Streptococcus pneumoniae strain R6.</title>
        <authorList>
            <person name="Hoskins J."/>
            <person name="Alborn W.E. Jr."/>
            <person name="Arnold J."/>
            <person name="Blaszczak L.C."/>
            <person name="Burgett S."/>
            <person name="DeHoff B.S."/>
            <person name="Estrem S.T."/>
            <person name="Fritz L."/>
            <person name="Fu D.-J."/>
            <person name="Fuller W."/>
            <person name="Geringer C."/>
            <person name="Gilmour R."/>
            <person name="Glass J.S."/>
            <person name="Khoja H."/>
            <person name="Kraft A.R."/>
            <person name="Lagace R.E."/>
            <person name="LeBlanc D.J."/>
            <person name="Lee L.N."/>
            <person name="Lefkowitz E.J."/>
            <person name="Lu J."/>
            <person name="Matsushima P."/>
            <person name="McAhren S.M."/>
            <person name="McHenney M."/>
            <person name="McLeaster K."/>
            <person name="Mundy C.W."/>
            <person name="Nicas T.I."/>
            <person name="Norris F.H."/>
            <person name="O'Gara M."/>
            <person name="Peery R.B."/>
            <person name="Robertson G.T."/>
            <person name="Rockey P."/>
            <person name="Sun P.-M."/>
            <person name="Winkler M.E."/>
            <person name="Yang Y."/>
            <person name="Young-Bellido M."/>
            <person name="Zhao G."/>
            <person name="Zook C.A."/>
            <person name="Baltz R.H."/>
            <person name="Jaskunas S.R."/>
            <person name="Rosteck P.R. Jr."/>
            <person name="Skatrud P.L."/>
            <person name="Glass J.I."/>
        </authorList>
    </citation>
    <scope>NUCLEOTIDE SEQUENCE [LARGE SCALE GENOMIC DNA]</scope>
    <source>
        <strain>ATCC BAA-255 / R6</strain>
    </source>
</reference>
<sequence>MKLNEVKEFVKELRGLSQEELAKRENELKKELFELRFQAATGQLEQTARLKEVKKQIARIKTVQSEAK</sequence>
<name>RL29_STRR6</name>